<name>LRGB_STAAW</name>
<evidence type="ECO:0000255" key="1">
    <source>
        <dbReference type="HAMAP-Rule" id="MF_01142"/>
    </source>
</evidence>
<reference key="1">
    <citation type="journal article" date="2002" name="Lancet">
        <title>Genome and virulence determinants of high virulence community-acquired MRSA.</title>
        <authorList>
            <person name="Baba T."/>
            <person name="Takeuchi F."/>
            <person name="Kuroda M."/>
            <person name="Yuzawa H."/>
            <person name="Aoki K."/>
            <person name="Oguchi A."/>
            <person name="Nagai Y."/>
            <person name="Iwama N."/>
            <person name="Asano K."/>
            <person name="Naimi T."/>
            <person name="Kuroda H."/>
            <person name="Cui L."/>
            <person name="Yamamoto K."/>
            <person name="Hiramatsu K."/>
        </authorList>
    </citation>
    <scope>NUCLEOTIDE SEQUENCE [LARGE SCALE GENOMIC DNA]</scope>
    <source>
        <strain>MW2</strain>
    </source>
</reference>
<keyword id="KW-1003">Cell membrane</keyword>
<keyword id="KW-0204">Cytolysis</keyword>
<keyword id="KW-0472">Membrane</keyword>
<keyword id="KW-0812">Transmembrane</keyword>
<keyword id="KW-1133">Transmembrane helix</keyword>
<sequence>MINHLALNTPYFGILLSVIPFFLATILFEKTNRFFLFAPLFVSMVFGVAFLYLTGIPYKTYKIGGDIIYFFLEPATICFAIPLYKKREVLVKHWHRIIGGIGIGTVVALLIILTFAKLAQFANDVILSMLPQAATTAIALPVSAGIGGIKELTSLAVILNGVIIYALGNKFLKLFRITNPIARGLALGTSGHTLGVAPAKELGPVEESMASIALVLVGVVVVAVVPVFVAIFF</sequence>
<dbReference type="EMBL" id="BA000033">
    <property type="protein sequence ID" value="BAB94104.1"/>
    <property type="molecule type" value="Genomic_DNA"/>
</dbReference>
<dbReference type="RefSeq" id="WP_000607067.1">
    <property type="nucleotide sequence ID" value="NC_003923.1"/>
</dbReference>
<dbReference type="KEGG" id="sam:MW0239"/>
<dbReference type="HOGENOM" id="CLU_082099_1_0_9"/>
<dbReference type="GO" id="GO:0005886">
    <property type="term" value="C:plasma membrane"/>
    <property type="evidence" value="ECO:0007669"/>
    <property type="project" value="UniProtKB-SubCell"/>
</dbReference>
<dbReference type="GO" id="GO:0019835">
    <property type="term" value="P:cytolysis"/>
    <property type="evidence" value="ECO:0007669"/>
    <property type="project" value="UniProtKB-UniRule"/>
</dbReference>
<dbReference type="GO" id="GO:0031640">
    <property type="term" value="P:killing of cells of another organism"/>
    <property type="evidence" value="ECO:0007669"/>
    <property type="project" value="UniProtKB-KW"/>
</dbReference>
<dbReference type="GO" id="GO:0012501">
    <property type="term" value="P:programmed cell death"/>
    <property type="evidence" value="ECO:0007669"/>
    <property type="project" value="UniProtKB-UniRule"/>
</dbReference>
<dbReference type="HAMAP" id="MF_01142">
    <property type="entry name" value="LrgB"/>
    <property type="match status" value="1"/>
</dbReference>
<dbReference type="InterPro" id="IPR024891">
    <property type="entry name" value="Antiholin-like_LrgB"/>
</dbReference>
<dbReference type="InterPro" id="IPR007300">
    <property type="entry name" value="CidB/LrgB"/>
</dbReference>
<dbReference type="NCBIfam" id="NF003291">
    <property type="entry name" value="PRK04288.1"/>
    <property type="match status" value="1"/>
</dbReference>
<dbReference type="PANTHER" id="PTHR30249:SF0">
    <property type="entry name" value="PLASTIDAL GLYCOLATE_GLYCERATE TRANSLOCATOR 1, CHLOROPLASTIC"/>
    <property type="match status" value="1"/>
</dbReference>
<dbReference type="PANTHER" id="PTHR30249">
    <property type="entry name" value="PUTATIVE SEROTONIN TRANSPORTER"/>
    <property type="match status" value="1"/>
</dbReference>
<dbReference type="Pfam" id="PF04172">
    <property type="entry name" value="LrgB"/>
    <property type="match status" value="1"/>
</dbReference>
<comment type="function">
    <text evidence="1">Inhibits the expression or activity of extracellular murein hydrolases by interacting, possibly with LrgA, with the holin-like proteins CidA and/or CidB. The LrgAB and CidAB proteins may affect the proton motive force of the membrane. May be involved in programmed cell death (PCD), possibly triggering PCD in response to antibiotics and environmental stresses.</text>
</comment>
<comment type="subcellular location">
    <subcellularLocation>
        <location evidence="1">Cell membrane</location>
        <topology evidence="1">Multi-pass membrane protein</topology>
    </subcellularLocation>
</comment>
<comment type="similarity">
    <text evidence="1">Belongs to the CidB/LrgB family. LrgB subfamily.</text>
</comment>
<feature type="chain" id="PRO_0000217062" description="Antiholin-like protein LrgB">
    <location>
        <begin position="1"/>
        <end position="233"/>
    </location>
</feature>
<feature type="transmembrane region" description="Helical" evidence="1">
    <location>
        <begin position="5"/>
        <end position="27"/>
    </location>
</feature>
<feature type="transmembrane region" description="Helical" evidence="1">
    <location>
        <begin position="34"/>
        <end position="56"/>
    </location>
</feature>
<feature type="transmembrane region" description="Helical" evidence="1">
    <location>
        <begin position="67"/>
        <end position="84"/>
    </location>
</feature>
<feature type="transmembrane region" description="Helical" evidence="1">
    <location>
        <begin position="97"/>
        <end position="116"/>
    </location>
</feature>
<feature type="transmembrane region" description="Helical" evidence="1">
    <location>
        <begin position="126"/>
        <end position="148"/>
    </location>
</feature>
<feature type="transmembrane region" description="Helical" evidence="1">
    <location>
        <begin position="155"/>
        <end position="177"/>
    </location>
</feature>
<feature type="transmembrane region" description="Helical" evidence="1">
    <location>
        <begin position="210"/>
        <end position="232"/>
    </location>
</feature>
<proteinExistence type="inferred from homology"/>
<organism>
    <name type="scientific">Staphylococcus aureus (strain MW2)</name>
    <dbReference type="NCBI Taxonomy" id="196620"/>
    <lineage>
        <taxon>Bacteria</taxon>
        <taxon>Bacillati</taxon>
        <taxon>Bacillota</taxon>
        <taxon>Bacilli</taxon>
        <taxon>Bacillales</taxon>
        <taxon>Staphylococcaceae</taxon>
        <taxon>Staphylococcus</taxon>
    </lineage>
</organism>
<protein>
    <recommendedName>
        <fullName evidence="1">Antiholin-like protein LrgB</fullName>
    </recommendedName>
</protein>
<gene>
    <name evidence="1" type="primary">lrgB</name>
    <name type="ordered locus">MW0239</name>
</gene>
<accession>P60644</accession>
<accession>P72359</accession>